<sequence length="121" mass="13881">MARILGVEVPDNKALFVGLTYIYGIGRKTALDILNNLEIDPNKRAKELTDDEISRLSHHINENYKVEGELRQEINKNIKRLIDIGSYRGKRHKAGLPVRGQKTHSNARTRKGPRLTKIKKR</sequence>
<gene>
    <name evidence="1" type="primary">rpsM</name>
    <name type="ordered locus">Pmob_0765</name>
</gene>
<organism>
    <name type="scientific">Petrotoga mobilis (strain DSM 10674 / SJ95)</name>
    <dbReference type="NCBI Taxonomy" id="403833"/>
    <lineage>
        <taxon>Bacteria</taxon>
        <taxon>Thermotogati</taxon>
        <taxon>Thermotogota</taxon>
        <taxon>Thermotogae</taxon>
        <taxon>Petrotogales</taxon>
        <taxon>Petrotogaceae</taxon>
        <taxon>Petrotoga</taxon>
    </lineage>
</organism>
<dbReference type="EMBL" id="CP000879">
    <property type="protein sequence ID" value="ABX31489.1"/>
    <property type="molecule type" value="Genomic_DNA"/>
</dbReference>
<dbReference type="RefSeq" id="WP_012208592.1">
    <property type="nucleotide sequence ID" value="NC_010003.1"/>
</dbReference>
<dbReference type="SMR" id="A9BFZ3"/>
<dbReference type="STRING" id="403833.Pmob_0765"/>
<dbReference type="KEGG" id="pmo:Pmob_0765"/>
<dbReference type="eggNOG" id="COG0099">
    <property type="taxonomic scope" value="Bacteria"/>
</dbReference>
<dbReference type="HOGENOM" id="CLU_103849_1_2_0"/>
<dbReference type="OrthoDB" id="9803610at2"/>
<dbReference type="Proteomes" id="UP000000789">
    <property type="component" value="Chromosome"/>
</dbReference>
<dbReference type="GO" id="GO:0005829">
    <property type="term" value="C:cytosol"/>
    <property type="evidence" value="ECO:0007669"/>
    <property type="project" value="TreeGrafter"/>
</dbReference>
<dbReference type="GO" id="GO:0015935">
    <property type="term" value="C:small ribosomal subunit"/>
    <property type="evidence" value="ECO:0007669"/>
    <property type="project" value="TreeGrafter"/>
</dbReference>
<dbReference type="GO" id="GO:0019843">
    <property type="term" value="F:rRNA binding"/>
    <property type="evidence" value="ECO:0007669"/>
    <property type="project" value="UniProtKB-UniRule"/>
</dbReference>
<dbReference type="GO" id="GO:0003735">
    <property type="term" value="F:structural constituent of ribosome"/>
    <property type="evidence" value="ECO:0007669"/>
    <property type="project" value="InterPro"/>
</dbReference>
<dbReference type="GO" id="GO:0000049">
    <property type="term" value="F:tRNA binding"/>
    <property type="evidence" value="ECO:0007669"/>
    <property type="project" value="UniProtKB-UniRule"/>
</dbReference>
<dbReference type="GO" id="GO:0006412">
    <property type="term" value="P:translation"/>
    <property type="evidence" value="ECO:0007669"/>
    <property type="project" value="UniProtKB-UniRule"/>
</dbReference>
<dbReference type="FunFam" id="1.10.8.50:FF:000001">
    <property type="entry name" value="30S ribosomal protein S13"/>
    <property type="match status" value="1"/>
</dbReference>
<dbReference type="Gene3D" id="1.10.8.50">
    <property type="match status" value="1"/>
</dbReference>
<dbReference type="Gene3D" id="4.10.910.10">
    <property type="entry name" value="30s ribosomal protein s13, domain 2"/>
    <property type="match status" value="1"/>
</dbReference>
<dbReference type="HAMAP" id="MF_01315">
    <property type="entry name" value="Ribosomal_uS13"/>
    <property type="match status" value="1"/>
</dbReference>
<dbReference type="InterPro" id="IPR027437">
    <property type="entry name" value="Rbsml_uS13_C"/>
</dbReference>
<dbReference type="InterPro" id="IPR001892">
    <property type="entry name" value="Ribosomal_uS13"/>
</dbReference>
<dbReference type="InterPro" id="IPR010979">
    <property type="entry name" value="Ribosomal_uS13-like_H2TH"/>
</dbReference>
<dbReference type="InterPro" id="IPR019980">
    <property type="entry name" value="Ribosomal_uS13_bac-type"/>
</dbReference>
<dbReference type="InterPro" id="IPR018269">
    <property type="entry name" value="Ribosomal_uS13_CS"/>
</dbReference>
<dbReference type="NCBIfam" id="TIGR03631">
    <property type="entry name" value="uS13_bact"/>
    <property type="match status" value="1"/>
</dbReference>
<dbReference type="PANTHER" id="PTHR10871">
    <property type="entry name" value="30S RIBOSOMAL PROTEIN S13/40S RIBOSOMAL PROTEIN S18"/>
    <property type="match status" value="1"/>
</dbReference>
<dbReference type="PANTHER" id="PTHR10871:SF1">
    <property type="entry name" value="SMALL RIBOSOMAL SUBUNIT PROTEIN US13M"/>
    <property type="match status" value="1"/>
</dbReference>
<dbReference type="Pfam" id="PF00416">
    <property type="entry name" value="Ribosomal_S13"/>
    <property type="match status" value="1"/>
</dbReference>
<dbReference type="PIRSF" id="PIRSF002134">
    <property type="entry name" value="Ribosomal_S13"/>
    <property type="match status" value="1"/>
</dbReference>
<dbReference type="SUPFAM" id="SSF46946">
    <property type="entry name" value="S13-like H2TH domain"/>
    <property type="match status" value="1"/>
</dbReference>
<dbReference type="PROSITE" id="PS00646">
    <property type="entry name" value="RIBOSOMAL_S13_1"/>
    <property type="match status" value="1"/>
</dbReference>
<dbReference type="PROSITE" id="PS50159">
    <property type="entry name" value="RIBOSOMAL_S13_2"/>
    <property type="match status" value="1"/>
</dbReference>
<name>RS13_PETMO</name>
<proteinExistence type="inferred from homology"/>
<evidence type="ECO:0000255" key="1">
    <source>
        <dbReference type="HAMAP-Rule" id="MF_01315"/>
    </source>
</evidence>
<evidence type="ECO:0000256" key="2">
    <source>
        <dbReference type="SAM" id="MobiDB-lite"/>
    </source>
</evidence>
<evidence type="ECO:0000305" key="3"/>
<comment type="function">
    <text evidence="1">Located at the top of the head of the 30S subunit, it contacts several helices of the 16S rRNA. In the 70S ribosome it contacts the 23S rRNA (bridge B1a) and protein L5 of the 50S subunit (bridge B1b), connecting the 2 subunits; these bridges are implicated in subunit movement. Contacts the tRNAs in the A and P-sites.</text>
</comment>
<comment type="subunit">
    <text evidence="1">Part of the 30S ribosomal subunit. Forms a loose heterodimer with protein S19. Forms two bridges to the 50S subunit in the 70S ribosome.</text>
</comment>
<comment type="similarity">
    <text evidence="1">Belongs to the universal ribosomal protein uS13 family.</text>
</comment>
<keyword id="KW-0687">Ribonucleoprotein</keyword>
<keyword id="KW-0689">Ribosomal protein</keyword>
<keyword id="KW-0694">RNA-binding</keyword>
<keyword id="KW-0699">rRNA-binding</keyword>
<keyword id="KW-0820">tRNA-binding</keyword>
<accession>A9BFZ3</accession>
<reference key="1">
    <citation type="submission" date="2007-11" db="EMBL/GenBank/DDBJ databases">
        <title>Complete sequence of Petroga mobilis SJ95.</title>
        <authorList>
            <consortium name="US DOE Joint Genome Institute"/>
            <person name="Copeland A."/>
            <person name="Lucas S."/>
            <person name="Lapidus A."/>
            <person name="Barry K."/>
            <person name="Glavina del Rio T."/>
            <person name="Dalin E."/>
            <person name="Tice H."/>
            <person name="Pitluck S."/>
            <person name="Meincke L."/>
            <person name="Brettin T."/>
            <person name="Bruce D."/>
            <person name="Detter J.C."/>
            <person name="Han C."/>
            <person name="Kuske C.R."/>
            <person name="Schmutz J."/>
            <person name="Larimer F."/>
            <person name="Land M."/>
            <person name="Hauser L."/>
            <person name="Kyrpides N."/>
            <person name="Mikhailova N."/>
            <person name="Noll K."/>
            <person name="Richardson P."/>
        </authorList>
    </citation>
    <scope>NUCLEOTIDE SEQUENCE [LARGE SCALE GENOMIC DNA]</scope>
    <source>
        <strain>DSM 10674 / SJ95</strain>
    </source>
</reference>
<feature type="chain" id="PRO_1000086249" description="Small ribosomal subunit protein uS13">
    <location>
        <begin position="1"/>
        <end position="121"/>
    </location>
</feature>
<feature type="region of interest" description="Disordered" evidence="2">
    <location>
        <begin position="92"/>
        <end position="121"/>
    </location>
</feature>
<feature type="compositionally biased region" description="Basic residues" evidence="2">
    <location>
        <begin position="101"/>
        <end position="121"/>
    </location>
</feature>
<protein>
    <recommendedName>
        <fullName evidence="1">Small ribosomal subunit protein uS13</fullName>
    </recommendedName>
    <alternativeName>
        <fullName evidence="3">30S ribosomal protein S13</fullName>
    </alternativeName>
</protein>